<comment type="function">
    <text evidence="1">Major role in the synthesis of nucleoside triphosphates other than ATP. The ATP gamma phosphate is transferred to the NDP beta phosphate via a ping-pong mechanism, using a phosphorylated active-site intermediate.</text>
</comment>
<comment type="catalytic activity">
    <reaction evidence="1">
        <text>a 2'-deoxyribonucleoside 5'-diphosphate + ATP = a 2'-deoxyribonucleoside 5'-triphosphate + ADP</text>
        <dbReference type="Rhea" id="RHEA:44640"/>
        <dbReference type="ChEBI" id="CHEBI:30616"/>
        <dbReference type="ChEBI" id="CHEBI:61560"/>
        <dbReference type="ChEBI" id="CHEBI:73316"/>
        <dbReference type="ChEBI" id="CHEBI:456216"/>
        <dbReference type="EC" id="2.7.4.6"/>
    </reaction>
</comment>
<comment type="catalytic activity">
    <reaction evidence="1">
        <text>a ribonucleoside 5'-diphosphate + ATP = a ribonucleoside 5'-triphosphate + ADP</text>
        <dbReference type="Rhea" id="RHEA:18113"/>
        <dbReference type="ChEBI" id="CHEBI:30616"/>
        <dbReference type="ChEBI" id="CHEBI:57930"/>
        <dbReference type="ChEBI" id="CHEBI:61557"/>
        <dbReference type="ChEBI" id="CHEBI:456216"/>
        <dbReference type="EC" id="2.7.4.6"/>
    </reaction>
</comment>
<comment type="cofactor">
    <cofactor evidence="1">
        <name>Mg(2+)</name>
        <dbReference type="ChEBI" id="CHEBI:18420"/>
    </cofactor>
</comment>
<comment type="subunit">
    <text evidence="1">Homotetramer.</text>
</comment>
<comment type="subcellular location">
    <subcellularLocation>
        <location evidence="1">Cytoplasm</location>
    </subcellularLocation>
</comment>
<comment type="similarity">
    <text evidence="1">Belongs to the NDK family.</text>
</comment>
<reference key="1">
    <citation type="submission" date="2006-12" db="EMBL/GenBank/DDBJ databases">
        <title>Complete sequence of chromosome 1 of Verminephrobacter eiseniae EF01-2.</title>
        <authorList>
            <person name="Copeland A."/>
            <person name="Lucas S."/>
            <person name="Lapidus A."/>
            <person name="Barry K."/>
            <person name="Detter J.C."/>
            <person name="Glavina del Rio T."/>
            <person name="Dalin E."/>
            <person name="Tice H."/>
            <person name="Pitluck S."/>
            <person name="Chertkov O."/>
            <person name="Brettin T."/>
            <person name="Bruce D."/>
            <person name="Han C."/>
            <person name="Tapia R."/>
            <person name="Gilna P."/>
            <person name="Schmutz J."/>
            <person name="Larimer F."/>
            <person name="Land M."/>
            <person name="Hauser L."/>
            <person name="Kyrpides N."/>
            <person name="Kim E."/>
            <person name="Stahl D."/>
            <person name="Richardson P."/>
        </authorList>
    </citation>
    <scope>NUCLEOTIDE SEQUENCE [LARGE SCALE GENOMIC DNA]</scope>
    <source>
        <strain>EF01-2</strain>
    </source>
</reference>
<keyword id="KW-0067">ATP-binding</keyword>
<keyword id="KW-0963">Cytoplasm</keyword>
<keyword id="KW-0418">Kinase</keyword>
<keyword id="KW-0460">Magnesium</keyword>
<keyword id="KW-0479">Metal-binding</keyword>
<keyword id="KW-0546">Nucleotide metabolism</keyword>
<keyword id="KW-0547">Nucleotide-binding</keyword>
<keyword id="KW-0597">Phosphoprotein</keyword>
<keyword id="KW-1185">Reference proteome</keyword>
<keyword id="KW-0808">Transferase</keyword>
<accession>A1WE20</accession>
<dbReference type="EC" id="2.7.4.6" evidence="1"/>
<dbReference type="EMBL" id="CP000542">
    <property type="protein sequence ID" value="ABM55877.1"/>
    <property type="molecule type" value="Genomic_DNA"/>
</dbReference>
<dbReference type="RefSeq" id="WP_011807896.1">
    <property type="nucleotide sequence ID" value="NC_008786.1"/>
</dbReference>
<dbReference type="SMR" id="A1WE20"/>
<dbReference type="STRING" id="391735.Veis_0084"/>
<dbReference type="GeneID" id="76458843"/>
<dbReference type="KEGG" id="vei:Veis_0084"/>
<dbReference type="eggNOG" id="COG0105">
    <property type="taxonomic scope" value="Bacteria"/>
</dbReference>
<dbReference type="HOGENOM" id="CLU_060216_8_1_4"/>
<dbReference type="OrthoDB" id="9801161at2"/>
<dbReference type="Proteomes" id="UP000000374">
    <property type="component" value="Chromosome"/>
</dbReference>
<dbReference type="GO" id="GO:0005737">
    <property type="term" value="C:cytoplasm"/>
    <property type="evidence" value="ECO:0007669"/>
    <property type="project" value="UniProtKB-SubCell"/>
</dbReference>
<dbReference type="GO" id="GO:0005524">
    <property type="term" value="F:ATP binding"/>
    <property type="evidence" value="ECO:0007669"/>
    <property type="project" value="UniProtKB-UniRule"/>
</dbReference>
<dbReference type="GO" id="GO:0046872">
    <property type="term" value="F:metal ion binding"/>
    <property type="evidence" value="ECO:0007669"/>
    <property type="project" value="UniProtKB-KW"/>
</dbReference>
<dbReference type="GO" id="GO:0004550">
    <property type="term" value="F:nucleoside diphosphate kinase activity"/>
    <property type="evidence" value="ECO:0007669"/>
    <property type="project" value="UniProtKB-UniRule"/>
</dbReference>
<dbReference type="GO" id="GO:0006241">
    <property type="term" value="P:CTP biosynthetic process"/>
    <property type="evidence" value="ECO:0007669"/>
    <property type="project" value="UniProtKB-UniRule"/>
</dbReference>
<dbReference type="GO" id="GO:0006183">
    <property type="term" value="P:GTP biosynthetic process"/>
    <property type="evidence" value="ECO:0007669"/>
    <property type="project" value="UniProtKB-UniRule"/>
</dbReference>
<dbReference type="GO" id="GO:0006228">
    <property type="term" value="P:UTP biosynthetic process"/>
    <property type="evidence" value="ECO:0007669"/>
    <property type="project" value="UniProtKB-UniRule"/>
</dbReference>
<dbReference type="CDD" id="cd04413">
    <property type="entry name" value="NDPk_I"/>
    <property type="match status" value="1"/>
</dbReference>
<dbReference type="FunFam" id="3.30.70.141:FF:000001">
    <property type="entry name" value="Nucleoside diphosphate kinase"/>
    <property type="match status" value="1"/>
</dbReference>
<dbReference type="Gene3D" id="3.30.70.141">
    <property type="entry name" value="Nucleoside diphosphate kinase-like domain"/>
    <property type="match status" value="1"/>
</dbReference>
<dbReference type="HAMAP" id="MF_00451">
    <property type="entry name" value="NDP_kinase"/>
    <property type="match status" value="1"/>
</dbReference>
<dbReference type="InterPro" id="IPR034907">
    <property type="entry name" value="NDK-like_dom"/>
</dbReference>
<dbReference type="InterPro" id="IPR036850">
    <property type="entry name" value="NDK-like_dom_sf"/>
</dbReference>
<dbReference type="InterPro" id="IPR001564">
    <property type="entry name" value="Nucleoside_diP_kinase"/>
</dbReference>
<dbReference type="NCBIfam" id="NF001908">
    <property type="entry name" value="PRK00668.1"/>
    <property type="match status" value="1"/>
</dbReference>
<dbReference type="PANTHER" id="PTHR46161">
    <property type="entry name" value="NUCLEOSIDE DIPHOSPHATE KINASE"/>
    <property type="match status" value="1"/>
</dbReference>
<dbReference type="PANTHER" id="PTHR46161:SF3">
    <property type="entry name" value="NUCLEOSIDE DIPHOSPHATE KINASE DDB_G0292928-RELATED"/>
    <property type="match status" value="1"/>
</dbReference>
<dbReference type="Pfam" id="PF00334">
    <property type="entry name" value="NDK"/>
    <property type="match status" value="1"/>
</dbReference>
<dbReference type="PRINTS" id="PR01243">
    <property type="entry name" value="NUCDPKINASE"/>
</dbReference>
<dbReference type="SMART" id="SM00562">
    <property type="entry name" value="NDK"/>
    <property type="match status" value="1"/>
</dbReference>
<dbReference type="SUPFAM" id="SSF54919">
    <property type="entry name" value="Nucleoside diphosphate kinase, NDK"/>
    <property type="match status" value="1"/>
</dbReference>
<dbReference type="PROSITE" id="PS51374">
    <property type="entry name" value="NDPK_LIKE"/>
    <property type="match status" value="1"/>
</dbReference>
<feature type="chain" id="PRO_1000026309" description="Nucleoside diphosphate kinase">
    <location>
        <begin position="1"/>
        <end position="141"/>
    </location>
</feature>
<feature type="active site" description="Pros-phosphohistidine intermediate" evidence="1">
    <location>
        <position position="117"/>
    </location>
</feature>
<feature type="binding site" evidence="1">
    <location>
        <position position="11"/>
    </location>
    <ligand>
        <name>ATP</name>
        <dbReference type="ChEBI" id="CHEBI:30616"/>
    </ligand>
</feature>
<feature type="binding site" evidence="1">
    <location>
        <position position="59"/>
    </location>
    <ligand>
        <name>ATP</name>
        <dbReference type="ChEBI" id="CHEBI:30616"/>
    </ligand>
</feature>
<feature type="binding site" evidence="1">
    <location>
        <position position="87"/>
    </location>
    <ligand>
        <name>ATP</name>
        <dbReference type="ChEBI" id="CHEBI:30616"/>
    </ligand>
</feature>
<feature type="binding site" evidence="1">
    <location>
        <position position="93"/>
    </location>
    <ligand>
        <name>ATP</name>
        <dbReference type="ChEBI" id="CHEBI:30616"/>
    </ligand>
</feature>
<feature type="binding site" evidence="1">
    <location>
        <position position="104"/>
    </location>
    <ligand>
        <name>ATP</name>
        <dbReference type="ChEBI" id="CHEBI:30616"/>
    </ligand>
</feature>
<feature type="binding site" evidence="1">
    <location>
        <position position="114"/>
    </location>
    <ligand>
        <name>ATP</name>
        <dbReference type="ChEBI" id="CHEBI:30616"/>
    </ligand>
</feature>
<sequence>MAIERTLSIIKPDAVAKNVIGQIYARFEAAGLKIVAARMVHLARPEAERFYAVHKERPFFKDLVEFMISGPVMVQVLEGENAVLKNRELMGATDPKKAQTGTIRADFADSIDANAVHGSDAAETAQAEVAFFFPGLNIYPR</sequence>
<organism>
    <name type="scientific">Verminephrobacter eiseniae (strain EF01-2)</name>
    <dbReference type="NCBI Taxonomy" id="391735"/>
    <lineage>
        <taxon>Bacteria</taxon>
        <taxon>Pseudomonadati</taxon>
        <taxon>Pseudomonadota</taxon>
        <taxon>Betaproteobacteria</taxon>
        <taxon>Burkholderiales</taxon>
        <taxon>Comamonadaceae</taxon>
        <taxon>Verminephrobacter</taxon>
    </lineage>
</organism>
<protein>
    <recommendedName>
        <fullName evidence="1">Nucleoside diphosphate kinase</fullName>
        <shortName evidence="1">NDK</shortName>
        <shortName evidence="1">NDP kinase</shortName>
        <ecNumber evidence="1">2.7.4.6</ecNumber>
    </recommendedName>
    <alternativeName>
        <fullName evidence="1">Nucleoside-2-P kinase</fullName>
    </alternativeName>
</protein>
<evidence type="ECO:0000255" key="1">
    <source>
        <dbReference type="HAMAP-Rule" id="MF_00451"/>
    </source>
</evidence>
<name>NDK_VEREI</name>
<proteinExistence type="inferred from homology"/>
<gene>
    <name evidence="1" type="primary">ndk</name>
    <name type="ordered locus">Veis_0084</name>
</gene>